<dbReference type="EMBL" id="CU459141">
    <property type="protein sequence ID" value="CAM85299.1"/>
    <property type="molecule type" value="Genomic_DNA"/>
</dbReference>
<dbReference type="RefSeq" id="WP_000260334.1">
    <property type="nucleotide sequence ID" value="NZ_JBDGFB010000011.1"/>
</dbReference>
<dbReference type="SMR" id="B0V8L2"/>
<dbReference type="EnsemblBacteria" id="CAM85299">
    <property type="protein sequence ID" value="CAM85299"/>
    <property type="gene ID" value="ABAYE0321"/>
</dbReference>
<dbReference type="GeneID" id="9380727"/>
<dbReference type="KEGG" id="aby:ABAYE0321"/>
<dbReference type="HOGENOM" id="CLU_100590_5_1_6"/>
<dbReference type="GO" id="GO:0005737">
    <property type="term" value="C:cytoplasm"/>
    <property type="evidence" value="ECO:0007669"/>
    <property type="project" value="UniProtKB-ARBA"/>
</dbReference>
<dbReference type="GO" id="GO:0015935">
    <property type="term" value="C:small ribosomal subunit"/>
    <property type="evidence" value="ECO:0007669"/>
    <property type="project" value="TreeGrafter"/>
</dbReference>
<dbReference type="GO" id="GO:0003735">
    <property type="term" value="F:structural constituent of ribosome"/>
    <property type="evidence" value="ECO:0007669"/>
    <property type="project" value="InterPro"/>
</dbReference>
<dbReference type="GO" id="GO:0006412">
    <property type="term" value="P:translation"/>
    <property type="evidence" value="ECO:0007669"/>
    <property type="project" value="UniProtKB-UniRule"/>
</dbReference>
<dbReference type="FunFam" id="3.30.1320.10:FF:000001">
    <property type="entry name" value="30S ribosomal protein S16"/>
    <property type="match status" value="1"/>
</dbReference>
<dbReference type="Gene3D" id="3.30.1320.10">
    <property type="match status" value="1"/>
</dbReference>
<dbReference type="HAMAP" id="MF_00385">
    <property type="entry name" value="Ribosomal_bS16"/>
    <property type="match status" value="1"/>
</dbReference>
<dbReference type="InterPro" id="IPR000307">
    <property type="entry name" value="Ribosomal_bS16"/>
</dbReference>
<dbReference type="InterPro" id="IPR020592">
    <property type="entry name" value="Ribosomal_bS16_CS"/>
</dbReference>
<dbReference type="InterPro" id="IPR023803">
    <property type="entry name" value="Ribosomal_bS16_dom_sf"/>
</dbReference>
<dbReference type="NCBIfam" id="TIGR00002">
    <property type="entry name" value="S16"/>
    <property type="match status" value="1"/>
</dbReference>
<dbReference type="PANTHER" id="PTHR12919">
    <property type="entry name" value="30S RIBOSOMAL PROTEIN S16"/>
    <property type="match status" value="1"/>
</dbReference>
<dbReference type="PANTHER" id="PTHR12919:SF20">
    <property type="entry name" value="SMALL RIBOSOMAL SUBUNIT PROTEIN BS16M"/>
    <property type="match status" value="1"/>
</dbReference>
<dbReference type="Pfam" id="PF00886">
    <property type="entry name" value="Ribosomal_S16"/>
    <property type="match status" value="1"/>
</dbReference>
<dbReference type="SUPFAM" id="SSF54565">
    <property type="entry name" value="Ribosomal protein S16"/>
    <property type="match status" value="1"/>
</dbReference>
<dbReference type="PROSITE" id="PS00732">
    <property type="entry name" value="RIBOSOMAL_S16"/>
    <property type="match status" value="1"/>
</dbReference>
<accession>B0V8L2</accession>
<name>RS16_ACIBY</name>
<proteinExistence type="inferred from homology"/>
<gene>
    <name evidence="1" type="primary">rpsP</name>
    <name type="ordered locus">ABAYE0321</name>
</gene>
<comment type="similarity">
    <text evidence="1">Belongs to the bacterial ribosomal protein bS16 family.</text>
</comment>
<protein>
    <recommendedName>
        <fullName evidence="1">Small ribosomal subunit protein bS16</fullName>
    </recommendedName>
    <alternativeName>
        <fullName evidence="2">30S ribosomal protein S16</fullName>
    </alternativeName>
</protein>
<feature type="chain" id="PRO_1000196312" description="Small ribosomal subunit protein bS16">
    <location>
        <begin position="1"/>
        <end position="83"/>
    </location>
</feature>
<sequence length="83" mass="9200">MVVIRLARGGAKKRPFYQIVVTDSRNARDGRFIERIGFFNPTAQGQAEKLRLDADRFAHWVSQGAQPSERVASLAAQAKKATA</sequence>
<evidence type="ECO:0000255" key="1">
    <source>
        <dbReference type="HAMAP-Rule" id="MF_00385"/>
    </source>
</evidence>
<evidence type="ECO:0000305" key="2"/>
<reference key="1">
    <citation type="journal article" date="2008" name="PLoS ONE">
        <title>Comparative analysis of Acinetobacters: three genomes for three lifestyles.</title>
        <authorList>
            <person name="Vallenet D."/>
            <person name="Nordmann P."/>
            <person name="Barbe V."/>
            <person name="Poirel L."/>
            <person name="Mangenot S."/>
            <person name="Bataille E."/>
            <person name="Dossat C."/>
            <person name="Gas S."/>
            <person name="Kreimeyer A."/>
            <person name="Lenoble P."/>
            <person name="Oztas S."/>
            <person name="Poulain J."/>
            <person name="Segurens B."/>
            <person name="Robert C."/>
            <person name="Abergel C."/>
            <person name="Claverie J.-M."/>
            <person name="Raoult D."/>
            <person name="Medigue C."/>
            <person name="Weissenbach J."/>
            <person name="Cruveiller S."/>
        </authorList>
    </citation>
    <scope>NUCLEOTIDE SEQUENCE [LARGE SCALE GENOMIC DNA]</scope>
    <source>
        <strain>AYE</strain>
    </source>
</reference>
<organism>
    <name type="scientific">Acinetobacter baumannii (strain AYE)</name>
    <dbReference type="NCBI Taxonomy" id="509173"/>
    <lineage>
        <taxon>Bacteria</taxon>
        <taxon>Pseudomonadati</taxon>
        <taxon>Pseudomonadota</taxon>
        <taxon>Gammaproteobacteria</taxon>
        <taxon>Moraxellales</taxon>
        <taxon>Moraxellaceae</taxon>
        <taxon>Acinetobacter</taxon>
        <taxon>Acinetobacter calcoaceticus/baumannii complex</taxon>
    </lineage>
</organism>
<keyword id="KW-0687">Ribonucleoprotein</keyword>
<keyword id="KW-0689">Ribosomal protein</keyword>